<comment type="function">
    <text evidence="1">Transferase that catalyzes the transfer of sulfur from thiosulfate to thiophilic acceptors such as cyanide or dithiols. May function in a CysM-independent thiosulfate assimilation pathway by catalyzing the conversion of thiosulfate to sulfite, which can then be used for L-cysteine biosynthesis.</text>
</comment>
<comment type="catalytic activity">
    <reaction evidence="1">
        <text>thiosulfate + hydrogen cyanide = thiocyanate + sulfite + 2 H(+)</text>
        <dbReference type="Rhea" id="RHEA:16881"/>
        <dbReference type="ChEBI" id="CHEBI:15378"/>
        <dbReference type="ChEBI" id="CHEBI:17359"/>
        <dbReference type="ChEBI" id="CHEBI:18022"/>
        <dbReference type="ChEBI" id="CHEBI:18407"/>
        <dbReference type="ChEBI" id="CHEBI:33542"/>
        <dbReference type="EC" id="2.8.1.1"/>
    </reaction>
</comment>
<comment type="catalytic activity">
    <reaction evidence="1">
        <text>thiosulfate + [thioredoxin]-dithiol = [thioredoxin]-disulfide + hydrogen sulfide + sulfite + 2 H(+)</text>
        <dbReference type="Rhea" id="RHEA:83859"/>
        <dbReference type="Rhea" id="RHEA-COMP:10698"/>
        <dbReference type="Rhea" id="RHEA-COMP:10700"/>
        <dbReference type="ChEBI" id="CHEBI:15378"/>
        <dbReference type="ChEBI" id="CHEBI:17359"/>
        <dbReference type="ChEBI" id="CHEBI:29919"/>
        <dbReference type="ChEBI" id="CHEBI:29950"/>
        <dbReference type="ChEBI" id="CHEBI:33542"/>
        <dbReference type="ChEBI" id="CHEBI:50058"/>
    </reaction>
</comment>
<comment type="subcellular location">
    <subcellularLocation>
        <location evidence="1">Cytoplasm</location>
    </subcellularLocation>
</comment>
<comment type="similarity">
    <text evidence="1">Belongs to the GlpE family.</text>
</comment>
<proteinExistence type="inferred from homology"/>
<keyword id="KW-0963">Cytoplasm</keyword>
<keyword id="KW-0808">Transferase</keyword>
<reference key="1">
    <citation type="submission" date="2006-09" db="EMBL/GenBank/DDBJ databases">
        <authorList>
            <consortium name="The Klebsiella pneumonia Genome Sequencing Project"/>
            <person name="McClelland M."/>
            <person name="Sanderson E.K."/>
            <person name="Spieth J."/>
            <person name="Clifton W.S."/>
            <person name="Latreille P."/>
            <person name="Sabo A."/>
            <person name="Pepin K."/>
            <person name="Bhonagiri V."/>
            <person name="Porwollik S."/>
            <person name="Ali J."/>
            <person name="Wilson R.K."/>
        </authorList>
    </citation>
    <scope>NUCLEOTIDE SEQUENCE [LARGE SCALE GENOMIC DNA]</scope>
    <source>
        <strain>ATCC 700721 / MGH 78578</strain>
    </source>
</reference>
<protein>
    <recommendedName>
        <fullName evidence="1">Thiosulfate sulfurtransferase GlpE</fullName>
        <ecNumber evidence="1">2.8.1.1</ecNumber>
    </recommendedName>
</protein>
<dbReference type="EC" id="2.8.1.1" evidence="1"/>
<dbReference type="EMBL" id="CP000647">
    <property type="protein sequence ID" value="ABR79178.1"/>
    <property type="molecule type" value="Genomic_DNA"/>
</dbReference>
<dbReference type="RefSeq" id="WP_002920552.1">
    <property type="nucleotide sequence ID" value="NC_009648.1"/>
</dbReference>
<dbReference type="SMR" id="A6TF44"/>
<dbReference type="STRING" id="272620.KPN_03791"/>
<dbReference type="PaxDb" id="272620-KPN_03791"/>
<dbReference type="EnsemblBacteria" id="ABR79178">
    <property type="protein sequence ID" value="ABR79178"/>
    <property type="gene ID" value="KPN_03791"/>
</dbReference>
<dbReference type="KEGG" id="kpn:KPN_03791"/>
<dbReference type="HOGENOM" id="CLU_089574_14_0_6"/>
<dbReference type="Proteomes" id="UP000000265">
    <property type="component" value="Chromosome"/>
</dbReference>
<dbReference type="GO" id="GO:0005737">
    <property type="term" value="C:cytoplasm"/>
    <property type="evidence" value="ECO:0007669"/>
    <property type="project" value="UniProtKB-SubCell"/>
</dbReference>
<dbReference type="GO" id="GO:0004792">
    <property type="term" value="F:thiosulfate-cyanide sulfurtransferase activity"/>
    <property type="evidence" value="ECO:0007669"/>
    <property type="project" value="UniProtKB-UniRule"/>
</dbReference>
<dbReference type="GO" id="GO:0006071">
    <property type="term" value="P:glycerol metabolic process"/>
    <property type="evidence" value="ECO:0007669"/>
    <property type="project" value="UniProtKB-UniRule"/>
</dbReference>
<dbReference type="CDD" id="cd01444">
    <property type="entry name" value="GlpE_ST"/>
    <property type="match status" value="1"/>
</dbReference>
<dbReference type="FunFam" id="3.40.250.10:FF:000007">
    <property type="entry name" value="Thiosulfate sulfurtransferase GlpE"/>
    <property type="match status" value="1"/>
</dbReference>
<dbReference type="Gene3D" id="3.40.250.10">
    <property type="entry name" value="Rhodanese-like domain"/>
    <property type="match status" value="1"/>
</dbReference>
<dbReference type="HAMAP" id="MF_01009">
    <property type="entry name" value="Thiosulf_sulfurtr"/>
    <property type="match status" value="1"/>
</dbReference>
<dbReference type="InterPro" id="IPR050229">
    <property type="entry name" value="GlpE_sulfurtransferase"/>
</dbReference>
<dbReference type="InterPro" id="IPR001763">
    <property type="entry name" value="Rhodanese-like_dom"/>
</dbReference>
<dbReference type="InterPro" id="IPR036873">
    <property type="entry name" value="Rhodanese-like_dom_sf"/>
</dbReference>
<dbReference type="InterPro" id="IPR023695">
    <property type="entry name" value="Thiosulf_sulfurTrfase"/>
</dbReference>
<dbReference type="NCBIfam" id="NF001195">
    <property type="entry name" value="PRK00162.1"/>
    <property type="match status" value="1"/>
</dbReference>
<dbReference type="PANTHER" id="PTHR43031">
    <property type="entry name" value="FAD-DEPENDENT OXIDOREDUCTASE"/>
    <property type="match status" value="1"/>
</dbReference>
<dbReference type="PANTHER" id="PTHR43031:SF6">
    <property type="entry name" value="THIOSULFATE SULFURTRANSFERASE GLPE"/>
    <property type="match status" value="1"/>
</dbReference>
<dbReference type="Pfam" id="PF00581">
    <property type="entry name" value="Rhodanese"/>
    <property type="match status" value="1"/>
</dbReference>
<dbReference type="SMART" id="SM00450">
    <property type="entry name" value="RHOD"/>
    <property type="match status" value="1"/>
</dbReference>
<dbReference type="SUPFAM" id="SSF52821">
    <property type="entry name" value="Rhodanese/Cell cycle control phosphatase"/>
    <property type="match status" value="1"/>
</dbReference>
<dbReference type="PROSITE" id="PS50206">
    <property type="entry name" value="RHODANESE_3"/>
    <property type="match status" value="1"/>
</dbReference>
<gene>
    <name evidence="1" type="primary">glpE</name>
    <name type="ordered locus">KPN78578_37540</name>
    <name type="ORF">KPN_03791</name>
</gene>
<feature type="chain" id="PRO_1000062964" description="Thiosulfate sulfurtransferase GlpE">
    <location>
        <begin position="1"/>
        <end position="109"/>
    </location>
</feature>
<feature type="domain" description="Rhodanese" evidence="1">
    <location>
        <begin position="17"/>
        <end position="105"/>
    </location>
</feature>
<feature type="active site" description="Cysteine persulfide intermediate" evidence="1">
    <location>
        <position position="65"/>
    </location>
</feature>
<organism>
    <name type="scientific">Klebsiella pneumoniae subsp. pneumoniae (strain ATCC 700721 / MGH 78578)</name>
    <dbReference type="NCBI Taxonomy" id="272620"/>
    <lineage>
        <taxon>Bacteria</taxon>
        <taxon>Pseudomonadati</taxon>
        <taxon>Pseudomonadota</taxon>
        <taxon>Gammaproteobacteria</taxon>
        <taxon>Enterobacterales</taxon>
        <taxon>Enterobacteriaceae</taxon>
        <taxon>Klebsiella/Raoultella group</taxon>
        <taxon>Klebsiella</taxon>
        <taxon>Klebsiella pneumoniae complex</taxon>
    </lineage>
</organism>
<name>GLPE_KLEP7</name>
<evidence type="ECO:0000255" key="1">
    <source>
        <dbReference type="HAMAP-Rule" id="MF_01009"/>
    </source>
</evidence>
<accession>A6TF44</accession>
<sequence length="109" mass="12269">MEQFECINVEEAHQKLHQQTAVLVDIRDPQSYAMGHTPGAFHLTNDTLGAFMRDNDFDTAVMVMCYHGNSSKGAAQYLLQQGFDKVYSVDGGFDAWHRHFPAEVARGTF</sequence>